<gene>
    <name evidence="1" type="primary">rpsE</name>
    <name type="ordered locus">Anae109_1928</name>
</gene>
<reference key="1">
    <citation type="journal article" date="2015" name="Genome Announc.">
        <title>Complete genome sequence of Anaeromyxobacter sp. Fw109-5, an anaerobic, metal-reducing bacterium isolated from a contaminated subsurface environment.</title>
        <authorList>
            <person name="Hwang C."/>
            <person name="Copeland A."/>
            <person name="Lucas S."/>
            <person name="Lapidus A."/>
            <person name="Barry K."/>
            <person name="Glavina Del Rio T."/>
            <person name="Dalin E."/>
            <person name="Tice H."/>
            <person name="Pitluck S."/>
            <person name="Sims D."/>
            <person name="Brettin T."/>
            <person name="Bruce D.C."/>
            <person name="Detter J.C."/>
            <person name="Han C.S."/>
            <person name="Schmutz J."/>
            <person name="Larimer F.W."/>
            <person name="Land M.L."/>
            <person name="Hauser L.J."/>
            <person name="Kyrpides N."/>
            <person name="Lykidis A."/>
            <person name="Richardson P."/>
            <person name="Belieav A."/>
            <person name="Sanford R.A."/>
            <person name="Loeffler F.E."/>
            <person name="Fields M.W."/>
        </authorList>
    </citation>
    <scope>NUCLEOTIDE SEQUENCE [LARGE SCALE GENOMIC DNA]</scope>
    <source>
        <strain>Fw109-5</strain>
    </source>
</reference>
<proteinExistence type="inferred from homology"/>
<dbReference type="EMBL" id="CP000769">
    <property type="protein sequence ID" value="ABS26131.1"/>
    <property type="molecule type" value="Genomic_DNA"/>
</dbReference>
<dbReference type="RefSeq" id="WP_012096710.1">
    <property type="nucleotide sequence ID" value="NC_009675.1"/>
</dbReference>
<dbReference type="SMR" id="A7HBN5"/>
<dbReference type="STRING" id="404589.Anae109_1928"/>
<dbReference type="KEGG" id="afw:Anae109_1928"/>
<dbReference type="eggNOG" id="COG0098">
    <property type="taxonomic scope" value="Bacteria"/>
</dbReference>
<dbReference type="HOGENOM" id="CLU_065898_2_2_7"/>
<dbReference type="OrthoDB" id="9809045at2"/>
<dbReference type="Proteomes" id="UP000006382">
    <property type="component" value="Chromosome"/>
</dbReference>
<dbReference type="GO" id="GO:0015935">
    <property type="term" value="C:small ribosomal subunit"/>
    <property type="evidence" value="ECO:0007669"/>
    <property type="project" value="InterPro"/>
</dbReference>
<dbReference type="GO" id="GO:0019843">
    <property type="term" value="F:rRNA binding"/>
    <property type="evidence" value="ECO:0007669"/>
    <property type="project" value="UniProtKB-UniRule"/>
</dbReference>
<dbReference type="GO" id="GO:0003735">
    <property type="term" value="F:structural constituent of ribosome"/>
    <property type="evidence" value="ECO:0007669"/>
    <property type="project" value="InterPro"/>
</dbReference>
<dbReference type="GO" id="GO:0006412">
    <property type="term" value="P:translation"/>
    <property type="evidence" value="ECO:0007669"/>
    <property type="project" value="UniProtKB-UniRule"/>
</dbReference>
<dbReference type="FunFam" id="3.30.160.20:FF:000001">
    <property type="entry name" value="30S ribosomal protein S5"/>
    <property type="match status" value="1"/>
</dbReference>
<dbReference type="FunFam" id="3.30.230.10:FF:000002">
    <property type="entry name" value="30S ribosomal protein S5"/>
    <property type="match status" value="1"/>
</dbReference>
<dbReference type="Gene3D" id="3.30.160.20">
    <property type="match status" value="1"/>
</dbReference>
<dbReference type="Gene3D" id="3.30.230.10">
    <property type="match status" value="1"/>
</dbReference>
<dbReference type="HAMAP" id="MF_01307_B">
    <property type="entry name" value="Ribosomal_uS5_B"/>
    <property type="match status" value="1"/>
</dbReference>
<dbReference type="InterPro" id="IPR020568">
    <property type="entry name" value="Ribosomal_Su5_D2-typ_SF"/>
</dbReference>
<dbReference type="InterPro" id="IPR000851">
    <property type="entry name" value="Ribosomal_uS5"/>
</dbReference>
<dbReference type="InterPro" id="IPR005712">
    <property type="entry name" value="Ribosomal_uS5_bac-type"/>
</dbReference>
<dbReference type="InterPro" id="IPR005324">
    <property type="entry name" value="Ribosomal_uS5_C"/>
</dbReference>
<dbReference type="InterPro" id="IPR013810">
    <property type="entry name" value="Ribosomal_uS5_N"/>
</dbReference>
<dbReference type="InterPro" id="IPR018192">
    <property type="entry name" value="Ribosomal_uS5_N_CS"/>
</dbReference>
<dbReference type="InterPro" id="IPR014721">
    <property type="entry name" value="Ribsml_uS5_D2-typ_fold_subgr"/>
</dbReference>
<dbReference type="NCBIfam" id="TIGR01021">
    <property type="entry name" value="rpsE_bact"/>
    <property type="match status" value="1"/>
</dbReference>
<dbReference type="PANTHER" id="PTHR48277">
    <property type="entry name" value="MITOCHONDRIAL RIBOSOMAL PROTEIN S5"/>
    <property type="match status" value="1"/>
</dbReference>
<dbReference type="PANTHER" id="PTHR48277:SF1">
    <property type="entry name" value="MITOCHONDRIAL RIBOSOMAL PROTEIN S5"/>
    <property type="match status" value="1"/>
</dbReference>
<dbReference type="Pfam" id="PF00333">
    <property type="entry name" value="Ribosomal_S5"/>
    <property type="match status" value="1"/>
</dbReference>
<dbReference type="Pfam" id="PF03719">
    <property type="entry name" value="Ribosomal_S5_C"/>
    <property type="match status" value="1"/>
</dbReference>
<dbReference type="SUPFAM" id="SSF54768">
    <property type="entry name" value="dsRNA-binding domain-like"/>
    <property type="match status" value="1"/>
</dbReference>
<dbReference type="SUPFAM" id="SSF54211">
    <property type="entry name" value="Ribosomal protein S5 domain 2-like"/>
    <property type="match status" value="1"/>
</dbReference>
<dbReference type="PROSITE" id="PS00585">
    <property type="entry name" value="RIBOSOMAL_S5"/>
    <property type="match status" value="1"/>
</dbReference>
<dbReference type="PROSITE" id="PS50881">
    <property type="entry name" value="S5_DSRBD"/>
    <property type="match status" value="1"/>
</dbReference>
<accession>A7HBN5</accession>
<name>RS5_ANADF</name>
<evidence type="ECO:0000255" key="1">
    <source>
        <dbReference type="HAMAP-Rule" id="MF_01307"/>
    </source>
</evidence>
<evidence type="ECO:0000305" key="2"/>
<comment type="function">
    <text evidence="1">With S4 and S12 plays an important role in translational accuracy.</text>
</comment>
<comment type="function">
    <text evidence="1">Located at the back of the 30S subunit body where it stabilizes the conformation of the head with respect to the body.</text>
</comment>
<comment type="subunit">
    <text evidence="1">Part of the 30S ribosomal subunit. Contacts proteins S4 and S8.</text>
</comment>
<comment type="domain">
    <text>The N-terminal domain interacts with the head of the 30S subunit; the C-terminal domain interacts with the body and contacts protein S4. The interaction surface between S4 and S5 is involved in control of translational fidelity.</text>
</comment>
<comment type="similarity">
    <text evidence="1">Belongs to the universal ribosomal protein uS5 family.</text>
</comment>
<organism>
    <name type="scientific">Anaeromyxobacter sp. (strain Fw109-5)</name>
    <dbReference type="NCBI Taxonomy" id="404589"/>
    <lineage>
        <taxon>Bacteria</taxon>
        <taxon>Pseudomonadati</taxon>
        <taxon>Myxococcota</taxon>
        <taxon>Myxococcia</taxon>
        <taxon>Myxococcales</taxon>
        <taxon>Cystobacterineae</taxon>
        <taxon>Anaeromyxobacteraceae</taxon>
        <taxon>Anaeromyxobacter</taxon>
    </lineage>
</organism>
<keyword id="KW-1185">Reference proteome</keyword>
<keyword id="KW-0687">Ribonucleoprotein</keyword>
<keyword id="KW-0689">Ribosomal protein</keyword>
<keyword id="KW-0694">RNA-binding</keyword>
<keyword id="KW-0699">rRNA-binding</keyword>
<feature type="chain" id="PRO_0000323063" description="Small ribosomal subunit protein uS5">
    <location>
        <begin position="1"/>
        <end position="168"/>
    </location>
</feature>
<feature type="domain" description="S5 DRBM" evidence="1">
    <location>
        <begin position="12"/>
        <end position="75"/>
    </location>
</feature>
<protein>
    <recommendedName>
        <fullName evidence="1">Small ribosomal subunit protein uS5</fullName>
    </recommendedName>
    <alternativeName>
        <fullName evidence="2">30S ribosomal protein S5</fullName>
    </alternativeName>
</protein>
<sequence>MATPINANELELQDKVVHINRVAKVVKGGRRFSFSALVVVGDGNGYVGVGLGKANEVPEAIRKGGDQAKKNLFKVPLVGTTIPHEVLGHFGAGWVLLKPAGEGTGVIAGGTVRAVLEAAGIRNVLTKCQGSRNPHNVLKATVAGLKRLRSADDAARARGKQAGELGGA</sequence>